<feature type="chain" id="PRO_0000284999" description="Ribosomal RNA small subunit methyltransferase F">
    <location>
        <begin position="1"/>
        <end position="479"/>
    </location>
</feature>
<feature type="active site" description="Nucleophile" evidence="1">
    <location>
        <position position="247"/>
    </location>
</feature>
<feature type="binding site" evidence="1">
    <location>
        <begin position="125"/>
        <end position="131"/>
    </location>
    <ligand>
        <name>S-adenosyl-L-methionine</name>
        <dbReference type="ChEBI" id="CHEBI:59789"/>
    </ligand>
</feature>
<feature type="binding site" evidence="1">
    <location>
        <position position="149"/>
    </location>
    <ligand>
        <name>S-adenosyl-L-methionine</name>
        <dbReference type="ChEBI" id="CHEBI:59789"/>
    </ligand>
</feature>
<feature type="binding site" evidence="1">
    <location>
        <position position="176"/>
    </location>
    <ligand>
        <name>S-adenosyl-L-methionine</name>
        <dbReference type="ChEBI" id="CHEBI:59789"/>
    </ligand>
</feature>
<feature type="binding site" evidence="1">
    <location>
        <position position="194"/>
    </location>
    <ligand>
        <name>S-adenosyl-L-methionine</name>
        <dbReference type="ChEBI" id="CHEBI:59789"/>
    </ligand>
</feature>
<keyword id="KW-0963">Cytoplasm</keyword>
<keyword id="KW-0489">Methyltransferase</keyword>
<keyword id="KW-1185">Reference proteome</keyword>
<keyword id="KW-0694">RNA-binding</keyword>
<keyword id="KW-0698">rRNA processing</keyword>
<keyword id="KW-0949">S-adenosyl-L-methionine</keyword>
<keyword id="KW-0808">Transferase</keyword>
<name>RSMF_ECOK1</name>
<accession>A1AC00</accession>
<dbReference type="EC" id="2.1.1.178" evidence="1"/>
<dbReference type="EMBL" id="CP000468">
    <property type="protein sequence ID" value="ABJ01190.1"/>
    <property type="status" value="ALT_INIT"/>
    <property type="molecule type" value="Genomic_DNA"/>
</dbReference>
<dbReference type="RefSeq" id="WP_001350670.1">
    <property type="nucleotide sequence ID" value="NZ_CADILS010000034.1"/>
</dbReference>
<dbReference type="SMR" id="A1AC00"/>
<dbReference type="KEGG" id="ecv:APECO1_889"/>
<dbReference type="HOGENOM" id="CLU_005316_6_2_6"/>
<dbReference type="Proteomes" id="UP000008216">
    <property type="component" value="Chromosome"/>
</dbReference>
<dbReference type="GO" id="GO:0005737">
    <property type="term" value="C:cytoplasm"/>
    <property type="evidence" value="ECO:0007669"/>
    <property type="project" value="UniProtKB-SubCell"/>
</dbReference>
<dbReference type="GO" id="GO:0003723">
    <property type="term" value="F:RNA binding"/>
    <property type="evidence" value="ECO:0007669"/>
    <property type="project" value="UniProtKB-KW"/>
</dbReference>
<dbReference type="GO" id="GO:0009383">
    <property type="term" value="F:rRNA (cytosine-C5-)-methyltransferase activity"/>
    <property type="evidence" value="ECO:0007669"/>
    <property type="project" value="TreeGrafter"/>
</dbReference>
<dbReference type="GO" id="GO:0070475">
    <property type="term" value="P:rRNA base methylation"/>
    <property type="evidence" value="ECO:0007669"/>
    <property type="project" value="TreeGrafter"/>
</dbReference>
<dbReference type="FunFam" id="3.10.450.720:FF:000001">
    <property type="entry name" value="Ribosomal RNA small subunit methyltransferase F"/>
    <property type="match status" value="1"/>
</dbReference>
<dbReference type="FunFam" id="3.40.50.150:FF:000079">
    <property type="entry name" value="Ribosomal RNA small subunit methyltransferase F"/>
    <property type="match status" value="1"/>
</dbReference>
<dbReference type="Gene3D" id="3.10.450.720">
    <property type="match status" value="1"/>
</dbReference>
<dbReference type="Gene3D" id="3.40.50.150">
    <property type="entry name" value="Vaccinia Virus protein VP39"/>
    <property type="match status" value="1"/>
</dbReference>
<dbReference type="HAMAP" id="MF_01579">
    <property type="entry name" value="16SrRNA_methyltr_F"/>
    <property type="match status" value="1"/>
</dbReference>
<dbReference type="InterPro" id="IPR031341">
    <property type="entry name" value="Methyltr_RsmF_N"/>
</dbReference>
<dbReference type="InterPro" id="IPR049560">
    <property type="entry name" value="MeTrfase_RsmB-F_NOP2_cat"/>
</dbReference>
<dbReference type="InterPro" id="IPR001678">
    <property type="entry name" value="MeTrfase_RsmB-F_NOP2_dom"/>
</dbReference>
<dbReference type="InterPro" id="IPR027391">
    <property type="entry name" value="Nol1_Nop2_Fmu_2"/>
</dbReference>
<dbReference type="InterPro" id="IPR011023">
    <property type="entry name" value="Nop2p"/>
</dbReference>
<dbReference type="InterPro" id="IPR023267">
    <property type="entry name" value="RCMT"/>
</dbReference>
<dbReference type="InterPro" id="IPR023545">
    <property type="entry name" value="rRNA_ssu_MeTfrase_F"/>
</dbReference>
<dbReference type="InterPro" id="IPR018314">
    <property type="entry name" value="RsmB/NOL1/NOP2-like_CS"/>
</dbReference>
<dbReference type="InterPro" id="IPR029063">
    <property type="entry name" value="SAM-dependent_MTases_sf"/>
</dbReference>
<dbReference type="InterPro" id="IPR048457">
    <property type="entry name" value="YebU_pre-PUA_dom"/>
</dbReference>
<dbReference type="NCBIfam" id="TIGR00446">
    <property type="entry name" value="nop2p"/>
    <property type="match status" value="1"/>
</dbReference>
<dbReference type="NCBIfam" id="NF008898">
    <property type="entry name" value="PRK11933.1"/>
    <property type="match status" value="1"/>
</dbReference>
<dbReference type="PANTHER" id="PTHR22807:SF30">
    <property type="entry name" value="28S RRNA (CYTOSINE(4447)-C(5))-METHYLTRANSFERASE-RELATED"/>
    <property type="match status" value="1"/>
</dbReference>
<dbReference type="PANTHER" id="PTHR22807">
    <property type="entry name" value="NOP2 YEAST -RELATED NOL1/NOP2/FMU SUN DOMAIN-CONTAINING"/>
    <property type="match status" value="1"/>
</dbReference>
<dbReference type="Pfam" id="PF01189">
    <property type="entry name" value="Methyltr_RsmB-F"/>
    <property type="match status" value="1"/>
</dbReference>
<dbReference type="Pfam" id="PF17125">
    <property type="entry name" value="Methyltr_RsmF_N"/>
    <property type="match status" value="1"/>
</dbReference>
<dbReference type="Pfam" id="PF13636">
    <property type="entry name" value="Methyltranf_PUA"/>
    <property type="match status" value="1"/>
</dbReference>
<dbReference type="Pfam" id="PF21150">
    <property type="entry name" value="YebU_pre-PUA_dom"/>
    <property type="match status" value="1"/>
</dbReference>
<dbReference type="PRINTS" id="PR02008">
    <property type="entry name" value="RCMTFAMILY"/>
</dbReference>
<dbReference type="SUPFAM" id="SSF53335">
    <property type="entry name" value="S-adenosyl-L-methionine-dependent methyltransferases"/>
    <property type="match status" value="1"/>
</dbReference>
<dbReference type="PROSITE" id="PS01153">
    <property type="entry name" value="NOL1_NOP2_SUN"/>
    <property type="match status" value="1"/>
</dbReference>
<dbReference type="PROSITE" id="PS51686">
    <property type="entry name" value="SAM_MT_RSMB_NOP"/>
    <property type="match status" value="1"/>
</dbReference>
<organism>
    <name type="scientific">Escherichia coli O1:K1 / APEC</name>
    <dbReference type="NCBI Taxonomy" id="405955"/>
    <lineage>
        <taxon>Bacteria</taxon>
        <taxon>Pseudomonadati</taxon>
        <taxon>Pseudomonadota</taxon>
        <taxon>Gammaproteobacteria</taxon>
        <taxon>Enterobacterales</taxon>
        <taxon>Enterobacteriaceae</taxon>
        <taxon>Escherichia</taxon>
    </lineage>
</organism>
<comment type="function">
    <text evidence="1">Specifically methylates the cytosine at position 1407 (m5C1407) of 16S rRNA.</text>
</comment>
<comment type="catalytic activity">
    <reaction evidence="1">
        <text>cytidine(1407) in 16S rRNA + S-adenosyl-L-methionine = 5-methylcytidine(1407) in 16S rRNA + S-adenosyl-L-homocysteine + H(+)</text>
        <dbReference type="Rhea" id="RHEA:42756"/>
        <dbReference type="Rhea" id="RHEA-COMP:10223"/>
        <dbReference type="Rhea" id="RHEA-COMP:10224"/>
        <dbReference type="ChEBI" id="CHEBI:15378"/>
        <dbReference type="ChEBI" id="CHEBI:57856"/>
        <dbReference type="ChEBI" id="CHEBI:59789"/>
        <dbReference type="ChEBI" id="CHEBI:74483"/>
        <dbReference type="ChEBI" id="CHEBI:82748"/>
        <dbReference type="EC" id="2.1.1.178"/>
    </reaction>
</comment>
<comment type="subcellular location">
    <subcellularLocation>
        <location evidence="1">Cytoplasm</location>
    </subcellularLocation>
</comment>
<comment type="similarity">
    <text evidence="1">Belongs to the class I-like SAM-binding methyltransferase superfamily. RsmB/NOP family.</text>
</comment>
<comment type="sequence caution" evidence="2">
    <conflict type="erroneous initiation">
        <sequence resource="EMBL-CDS" id="ABJ01190"/>
    </conflict>
</comment>
<reference key="1">
    <citation type="journal article" date="2007" name="J. Bacteriol.">
        <title>The genome sequence of avian pathogenic Escherichia coli strain O1:K1:H7 shares strong similarities with human extraintestinal pathogenic E. coli genomes.</title>
        <authorList>
            <person name="Johnson T.J."/>
            <person name="Kariyawasam S."/>
            <person name="Wannemuehler Y."/>
            <person name="Mangiamele P."/>
            <person name="Johnson S.J."/>
            <person name="Doetkott C."/>
            <person name="Skyberg J.A."/>
            <person name="Lynne A.M."/>
            <person name="Johnson J.R."/>
            <person name="Nolan L.K."/>
        </authorList>
    </citation>
    <scope>NUCLEOTIDE SEQUENCE [LARGE SCALE GENOMIC DNA]</scope>
</reference>
<protein>
    <recommendedName>
        <fullName evidence="1">Ribosomal RNA small subunit methyltransferase F</fullName>
        <ecNumber evidence="1">2.1.1.178</ecNumber>
    </recommendedName>
    <alternativeName>
        <fullName evidence="1">16S rRNA m5C1407 methyltransferase</fullName>
    </alternativeName>
    <alternativeName>
        <fullName evidence="1">rRNA (cytosine-C(5)-)-methyltransferase RsmF</fullName>
    </alternativeName>
</protein>
<sequence>MAQHTVYFPDAFLTQMREAMPSTLSFDDFLAACQRPLRRSIRVNTLKTSVADFLQLTAPYGWTLTPIPWCEEGFWIERDSEDALPLGSTAEHLSGLFYIQEASSMLPVAALFADGNAPQRVMDVAAAPGSKTTQIAARMNNKGAILANEFSASRVKVLHANISRCGISNVALTHFDGRVFGAAVPEMFDAILLDAPCSGEGVVRKDPDALKNWSPESNQEIAATQRELIDSAFHALRLGGTLVYSTCTLNREENEAVCLWLKETYHDAVEFLPLGDLFPGANKALTEDGFLHVFPQIYDCEGFFVARLRKTQAIPVLPAPKYKVGNFPFSPVKDREAGQIRQAAASVGLNWDENLRLWQRDKELWLFPVGIEALIGKVRFSRLGIKLAETHNKGYRWQHEAVIALASPDNVNAFELTPQEAEEWYRGRDVYPQAAPVADDVLVTFQHQPIGLAKRIGSRLKNSYPRELVRDGKLFTGNA</sequence>
<gene>
    <name evidence="1" type="primary">rsmF</name>
    <name type="ordered locus">Ecok1_16960</name>
    <name type="ORF">APECO1_889</name>
</gene>
<proteinExistence type="inferred from homology"/>
<evidence type="ECO:0000255" key="1">
    <source>
        <dbReference type="HAMAP-Rule" id="MF_01579"/>
    </source>
</evidence>
<evidence type="ECO:0000305" key="2"/>